<dbReference type="EMBL" id="CP000031">
    <property type="protein sequence ID" value="AAV94474.1"/>
    <property type="molecule type" value="Genomic_DNA"/>
</dbReference>
<dbReference type="RefSeq" id="WP_011046921.1">
    <property type="nucleotide sequence ID" value="NC_003911.12"/>
</dbReference>
<dbReference type="SMR" id="Q5LU80"/>
<dbReference type="STRING" id="246200.SPO1178"/>
<dbReference type="PaxDb" id="246200-SPO1178"/>
<dbReference type="KEGG" id="sil:SPO1178"/>
<dbReference type="eggNOG" id="COG2001">
    <property type="taxonomic scope" value="Bacteria"/>
</dbReference>
<dbReference type="HOGENOM" id="CLU_107907_1_0_5"/>
<dbReference type="OrthoDB" id="9807753at2"/>
<dbReference type="Proteomes" id="UP000001023">
    <property type="component" value="Chromosome"/>
</dbReference>
<dbReference type="GO" id="GO:0005737">
    <property type="term" value="C:cytoplasm"/>
    <property type="evidence" value="ECO:0007669"/>
    <property type="project" value="UniProtKB-UniRule"/>
</dbReference>
<dbReference type="GO" id="GO:0009295">
    <property type="term" value="C:nucleoid"/>
    <property type="evidence" value="ECO:0007669"/>
    <property type="project" value="UniProtKB-SubCell"/>
</dbReference>
<dbReference type="GO" id="GO:0003700">
    <property type="term" value="F:DNA-binding transcription factor activity"/>
    <property type="evidence" value="ECO:0007669"/>
    <property type="project" value="UniProtKB-UniRule"/>
</dbReference>
<dbReference type="GO" id="GO:0000976">
    <property type="term" value="F:transcription cis-regulatory region binding"/>
    <property type="evidence" value="ECO:0007669"/>
    <property type="project" value="TreeGrafter"/>
</dbReference>
<dbReference type="GO" id="GO:2000143">
    <property type="term" value="P:negative regulation of DNA-templated transcription initiation"/>
    <property type="evidence" value="ECO:0007669"/>
    <property type="project" value="TreeGrafter"/>
</dbReference>
<dbReference type="CDD" id="cd16321">
    <property type="entry name" value="MraZ_C"/>
    <property type="match status" value="1"/>
</dbReference>
<dbReference type="CDD" id="cd16320">
    <property type="entry name" value="MraZ_N"/>
    <property type="match status" value="1"/>
</dbReference>
<dbReference type="Gene3D" id="3.40.1550.20">
    <property type="entry name" value="Transcriptional regulator MraZ domain"/>
    <property type="match status" value="1"/>
</dbReference>
<dbReference type="HAMAP" id="MF_01008">
    <property type="entry name" value="MraZ"/>
    <property type="match status" value="1"/>
</dbReference>
<dbReference type="InterPro" id="IPR003444">
    <property type="entry name" value="MraZ"/>
</dbReference>
<dbReference type="InterPro" id="IPR035644">
    <property type="entry name" value="MraZ_C"/>
</dbReference>
<dbReference type="InterPro" id="IPR020603">
    <property type="entry name" value="MraZ_dom"/>
</dbReference>
<dbReference type="InterPro" id="IPR035642">
    <property type="entry name" value="MraZ_N"/>
</dbReference>
<dbReference type="InterPro" id="IPR038619">
    <property type="entry name" value="MraZ_sf"/>
</dbReference>
<dbReference type="InterPro" id="IPR007159">
    <property type="entry name" value="SpoVT-AbrB_dom"/>
</dbReference>
<dbReference type="InterPro" id="IPR037914">
    <property type="entry name" value="SpoVT-AbrB_sf"/>
</dbReference>
<dbReference type="NCBIfam" id="NF001476">
    <property type="entry name" value="PRK00326.2-2"/>
    <property type="match status" value="1"/>
</dbReference>
<dbReference type="PANTHER" id="PTHR34701">
    <property type="entry name" value="TRANSCRIPTIONAL REGULATOR MRAZ"/>
    <property type="match status" value="1"/>
</dbReference>
<dbReference type="PANTHER" id="PTHR34701:SF1">
    <property type="entry name" value="TRANSCRIPTIONAL REGULATOR MRAZ"/>
    <property type="match status" value="1"/>
</dbReference>
<dbReference type="Pfam" id="PF02381">
    <property type="entry name" value="MraZ"/>
    <property type="match status" value="2"/>
</dbReference>
<dbReference type="SUPFAM" id="SSF89447">
    <property type="entry name" value="AbrB/MazE/MraZ-like"/>
    <property type="match status" value="1"/>
</dbReference>
<dbReference type="PROSITE" id="PS51740">
    <property type="entry name" value="SPOVT_ABRB"/>
    <property type="match status" value="2"/>
</dbReference>
<reference key="1">
    <citation type="journal article" date="2004" name="Nature">
        <title>Genome sequence of Silicibacter pomeroyi reveals adaptations to the marine environment.</title>
        <authorList>
            <person name="Moran M.A."/>
            <person name="Buchan A."/>
            <person name="Gonzalez J.M."/>
            <person name="Heidelberg J.F."/>
            <person name="Whitman W.B."/>
            <person name="Kiene R.P."/>
            <person name="Henriksen J.R."/>
            <person name="King G.M."/>
            <person name="Belas R."/>
            <person name="Fuqua C."/>
            <person name="Brinkac L.M."/>
            <person name="Lewis M."/>
            <person name="Johri S."/>
            <person name="Weaver B."/>
            <person name="Pai G."/>
            <person name="Eisen J.A."/>
            <person name="Rahe E."/>
            <person name="Sheldon W.M."/>
            <person name="Ye W."/>
            <person name="Miller T.R."/>
            <person name="Carlton J."/>
            <person name="Rasko D.A."/>
            <person name="Paulsen I.T."/>
            <person name="Ren Q."/>
            <person name="Daugherty S.C."/>
            <person name="DeBoy R.T."/>
            <person name="Dodson R.J."/>
            <person name="Durkin A.S."/>
            <person name="Madupu R."/>
            <person name="Nelson W.C."/>
            <person name="Sullivan S.A."/>
            <person name="Rosovitz M.J."/>
            <person name="Haft D.H."/>
            <person name="Selengut J."/>
            <person name="Ward N."/>
        </authorList>
    </citation>
    <scope>NUCLEOTIDE SEQUENCE [LARGE SCALE GENOMIC DNA]</scope>
    <source>
        <strain>ATCC 700808 / DSM 15171 / DSS-3</strain>
    </source>
</reference>
<reference key="2">
    <citation type="journal article" date="2014" name="Stand. Genomic Sci.">
        <title>An updated genome annotation for the model marine bacterium Ruegeria pomeroyi DSS-3.</title>
        <authorList>
            <person name="Rivers A.R."/>
            <person name="Smith C.B."/>
            <person name="Moran M.A."/>
        </authorList>
    </citation>
    <scope>GENOME REANNOTATION</scope>
    <source>
        <strain>ATCC 700808 / DSM 15171 / DSS-3</strain>
    </source>
</reference>
<sequence length="167" mass="18885">MARRFRGESNHKVDSKGRVSIPASFRRVLEAGDPNWQSGGNPELVIVYGDHRRKFLECYTMEAIDEVDAKIDALPRGSMERKMLQRMFHGQSFPTSVDETGRLVLPAKLRTKIALEDEAFFIAAGDTFQIWNPATYDQEELAAAEEWLDELPEDFDPMQYLDGAGGS</sequence>
<protein>
    <recommendedName>
        <fullName>Transcriptional regulator MraZ</fullName>
    </recommendedName>
</protein>
<keyword id="KW-0963">Cytoplasm</keyword>
<keyword id="KW-0238">DNA-binding</keyword>
<keyword id="KW-1185">Reference proteome</keyword>
<keyword id="KW-0677">Repeat</keyword>
<keyword id="KW-0804">Transcription</keyword>
<keyword id="KW-0805">Transcription regulation</keyword>
<organism>
    <name type="scientific">Ruegeria pomeroyi (strain ATCC 700808 / DSM 15171 / DSS-3)</name>
    <name type="common">Silicibacter pomeroyi</name>
    <dbReference type="NCBI Taxonomy" id="246200"/>
    <lineage>
        <taxon>Bacteria</taxon>
        <taxon>Pseudomonadati</taxon>
        <taxon>Pseudomonadota</taxon>
        <taxon>Alphaproteobacteria</taxon>
        <taxon>Rhodobacterales</taxon>
        <taxon>Roseobacteraceae</taxon>
        <taxon>Ruegeria</taxon>
    </lineage>
</organism>
<accession>Q5LU80</accession>
<name>MRAZ_RUEPO</name>
<feature type="chain" id="PRO_0000108536" description="Transcriptional regulator MraZ">
    <location>
        <begin position="1"/>
        <end position="167"/>
    </location>
</feature>
<feature type="domain" description="SpoVT-AbrB 1" evidence="2">
    <location>
        <begin position="8"/>
        <end position="51"/>
    </location>
</feature>
<feature type="domain" description="SpoVT-AbrB 2" evidence="2">
    <location>
        <begin position="92"/>
        <end position="135"/>
    </location>
</feature>
<evidence type="ECO:0000255" key="1">
    <source>
        <dbReference type="HAMAP-Rule" id="MF_01008"/>
    </source>
</evidence>
<evidence type="ECO:0000255" key="2">
    <source>
        <dbReference type="PROSITE-ProRule" id="PRU01076"/>
    </source>
</evidence>
<proteinExistence type="inferred from homology"/>
<gene>
    <name evidence="1" type="primary">mraZ</name>
    <name type="ordered locus">SPO1178</name>
</gene>
<comment type="subunit">
    <text evidence="1">Forms oligomers.</text>
</comment>
<comment type="subcellular location">
    <subcellularLocation>
        <location evidence="1">Cytoplasm</location>
        <location evidence="1">Nucleoid</location>
    </subcellularLocation>
</comment>
<comment type="similarity">
    <text evidence="1">Belongs to the MraZ family.</text>
</comment>